<comment type="function">
    <text evidence="1">Catalyzes the anaerobic formation of alpha-ketobutyrate and ammonia from threonine in a two-step reaction. The first step involved a dehydration of threonine and a production of enamine intermediates (aminocrotonate), which tautomerizes to its imine form (iminobutyrate). Both intermediates are unstable and short-lived. The second step is the nonenzymatic hydrolysis of the enamine/imine intermediates to form 2-ketobutyrate and free ammonia. In the low water environment of the cell, the second step is accelerated by RidA (By similarity).</text>
</comment>
<comment type="catalytic activity">
    <reaction>
        <text>L-threonine = 2-oxobutanoate + NH4(+)</text>
        <dbReference type="Rhea" id="RHEA:22108"/>
        <dbReference type="ChEBI" id="CHEBI:16763"/>
        <dbReference type="ChEBI" id="CHEBI:28938"/>
        <dbReference type="ChEBI" id="CHEBI:57926"/>
        <dbReference type="EC" id="4.3.1.19"/>
    </reaction>
</comment>
<comment type="cofactor">
    <cofactor evidence="1">
        <name>pyridoxal 5'-phosphate</name>
        <dbReference type="ChEBI" id="CHEBI:597326"/>
    </cofactor>
</comment>
<comment type="pathway">
    <text>Amino-acid biosynthesis; L-isoleucine biosynthesis; 2-oxobutanoate from L-threonine: step 1/1.</text>
</comment>
<comment type="subunit">
    <text evidence="1">Homotetramer.</text>
</comment>
<comment type="similarity">
    <text evidence="3">Belongs to the serine/threonine dehydratase family.</text>
</comment>
<accession>Q2YUE8</accession>
<protein>
    <recommendedName>
        <fullName>L-threonine dehydratase biosynthetic IlvA</fullName>
        <ecNumber>4.3.1.19</ecNumber>
    </recommendedName>
    <alternativeName>
        <fullName>Threonine deaminase</fullName>
    </alternativeName>
</protein>
<feature type="chain" id="PRO_0000234305" description="L-threonine dehydratase biosynthetic IlvA">
    <location>
        <begin position="1"/>
        <end position="422"/>
    </location>
</feature>
<feature type="domain" description="ACT-like" evidence="2">
    <location>
        <begin position="339"/>
        <end position="413"/>
    </location>
</feature>
<feature type="binding site" evidence="1">
    <location>
        <position position="83"/>
    </location>
    <ligand>
        <name>pyridoxal 5'-phosphate</name>
        <dbReference type="ChEBI" id="CHEBI:597326"/>
    </ligand>
</feature>
<feature type="binding site" evidence="1">
    <location>
        <begin position="189"/>
        <end position="193"/>
    </location>
    <ligand>
        <name>pyridoxal 5'-phosphate</name>
        <dbReference type="ChEBI" id="CHEBI:597326"/>
    </ligand>
</feature>
<feature type="binding site" evidence="1">
    <location>
        <position position="315"/>
    </location>
    <ligand>
        <name>pyridoxal 5'-phosphate</name>
        <dbReference type="ChEBI" id="CHEBI:597326"/>
    </ligand>
</feature>
<feature type="modified residue" description="N6-(pyridoxal phosphate)lysine" evidence="1">
    <location>
        <position position="56"/>
    </location>
</feature>
<keyword id="KW-0028">Amino-acid biosynthesis</keyword>
<keyword id="KW-0100">Branched-chain amino acid biosynthesis</keyword>
<keyword id="KW-0412">Isoleucine biosynthesis</keyword>
<keyword id="KW-0456">Lyase</keyword>
<keyword id="KW-0663">Pyridoxal phosphate</keyword>
<reference key="1">
    <citation type="journal article" date="2007" name="PLoS ONE">
        <title>Molecular correlates of host specialization in Staphylococcus aureus.</title>
        <authorList>
            <person name="Herron-Olson L."/>
            <person name="Fitzgerald J.R."/>
            <person name="Musser J.M."/>
            <person name="Kapur V."/>
        </authorList>
    </citation>
    <scope>NUCLEOTIDE SEQUENCE [LARGE SCALE GENOMIC DNA]</scope>
    <source>
        <strain>bovine RF122 / ET3-1</strain>
    </source>
</reference>
<proteinExistence type="inferred from homology"/>
<dbReference type="EC" id="4.3.1.19"/>
<dbReference type="EMBL" id="AJ938182">
    <property type="protein sequence ID" value="CAI81635.1"/>
    <property type="molecule type" value="Genomic_DNA"/>
</dbReference>
<dbReference type="RefSeq" id="WP_000216860.1">
    <property type="nucleotide sequence ID" value="NC_007622.1"/>
</dbReference>
<dbReference type="SMR" id="Q2YUE8"/>
<dbReference type="KEGG" id="sab:SAB1946"/>
<dbReference type="HOGENOM" id="CLU_021152_4_2_9"/>
<dbReference type="UniPathway" id="UPA00047">
    <property type="reaction ID" value="UER00054"/>
</dbReference>
<dbReference type="GO" id="GO:0003941">
    <property type="term" value="F:L-serine ammonia-lyase activity"/>
    <property type="evidence" value="ECO:0007669"/>
    <property type="project" value="TreeGrafter"/>
</dbReference>
<dbReference type="GO" id="GO:0030170">
    <property type="term" value="F:pyridoxal phosphate binding"/>
    <property type="evidence" value="ECO:0007669"/>
    <property type="project" value="InterPro"/>
</dbReference>
<dbReference type="GO" id="GO:0004794">
    <property type="term" value="F:threonine deaminase activity"/>
    <property type="evidence" value="ECO:0007669"/>
    <property type="project" value="UniProtKB-EC"/>
</dbReference>
<dbReference type="GO" id="GO:0009097">
    <property type="term" value="P:isoleucine biosynthetic process"/>
    <property type="evidence" value="ECO:0007669"/>
    <property type="project" value="UniProtKB-UniPathway"/>
</dbReference>
<dbReference type="GO" id="GO:0006565">
    <property type="term" value="P:L-serine catabolic process"/>
    <property type="evidence" value="ECO:0007669"/>
    <property type="project" value="TreeGrafter"/>
</dbReference>
<dbReference type="GO" id="GO:0006567">
    <property type="term" value="P:threonine catabolic process"/>
    <property type="evidence" value="ECO:0007669"/>
    <property type="project" value="TreeGrafter"/>
</dbReference>
<dbReference type="GO" id="GO:0006566">
    <property type="term" value="P:threonine metabolic process"/>
    <property type="evidence" value="ECO:0000250"/>
    <property type="project" value="UniProtKB"/>
</dbReference>
<dbReference type="CDD" id="cd04907">
    <property type="entry name" value="ACT_ThrD-I_2"/>
    <property type="match status" value="1"/>
</dbReference>
<dbReference type="CDD" id="cd01562">
    <property type="entry name" value="Thr-dehyd"/>
    <property type="match status" value="1"/>
</dbReference>
<dbReference type="FunFam" id="3.40.1020.10:FF:000002">
    <property type="entry name" value="L-threonine dehydratase"/>
    <property type="match status" value="1"/>
</dbReference>
<dbReference type="FunFam" id="3.40.50.1100:FF:000005">
    <property type="entry name" value="Threonine dehydratase catabolic"/>
    <property type="match status" value="1"/>
</dbReference>
<dbReference type="Gene3D" id="3.40.50.1100">
    <property type="match status" value="2"/>
</dbReference>
<dbReference type="Gene3D" id="3.40.1020.10">
    <property type="entry name" value="Biosynthetic Threonine Deaminase, Domain 3"/>
    <property type="match status" value="1"/>
</dbReference>
<dbReference type="InterPro" id="IPR045865">
    <property type="entry name" value="ACT-like_dom_sf"/>
</dbReference>
<dbReference type="InterPro" id="IPR011820">
    <property type="entry name" value="IlvA"/>
</dbReference>
<dbReference type="InterPro" id="IPR050147">
    <property type="entry name" value="Ser/Thr_Dehydratase"/>
</dbReference>
<dbReference type="InterPro" id="IPR000634">
    <property type="entry name" value="Ser/Thr_deHydtase_PyrdxlP-BS"/>
</dbReference>
<dbReference type="InterPro" id="IPR001721">
    <property type="entry name" value="TD_ACT-like"/>
</dbReference>
<dbReference type="InterPro" id="IPR038110">
    <property type="entry name" value="TD_ACT-like_sf"/>
</dbReference>
<dbReference type="InterPro" id="IPR001926">
    <property type="entry name" value="TrpB-like_PALP"/>
</dbReference>
<dbReference type="InterPro" id="IPR036052">
    <property type="entry name" value="TrpB-like_PALP_sf"/>
</dbReference>
<dbReference type="NCBIfam" id="NF006390">
    <property type="entry name" value="PRK08639.1"/>
    <property type="match status" value="1"/>
</dbReference>
<dbReference type="NCBIfam" id="TIGR02079">
    <property type="entry name" value="THD1"/>
    <property type="match status" value="1"/>
</dbReference>
<dbReference type="PANTHER" id="PTHR48078:SF11">
    <property type="entry name" value="THREONINE DEHYDRATASE, MITOCHONDRIAL"/>
    <property type="match status" value="1"/>
</dbReference>
<dbReference type="PANTHER" id="PTHR48078">
    <property type="entry name" value="THREONINE DEHYDRATASE, MITOCHONDRIAL-RELATED"/>
    <property type="match status" value="1"/>
</dbReference>
<dbReference type="Pfam" id="PF00291">
    <property type="entry name" value="PALP"/>
    <property type="match status" value="1"/>
</dbReference>
<dbReference type="Pfam" id="PF00585">
    <property type="entry name" value="Thr_dehydrat_C"/>
    <property type="match status" value="1"/>
</dbReference>
<dbReference type="SUPFAM" id="SSF55021">
    <property type="entry name" value="ACT-like"/>
    <property type="match status" value="1"/>
</dbReference>
<dbReference type="SUPFAM" id="SSF53686">
    <property type="entry name" value="Tryptophan synthase beta subunit-like PLP-dependent enzymes"/>
    <property type="match status" value="1"/>
</dbReference>
<dbReference type="PROSITE" id="PS51672">
    <property type="entry name" value="ACT_LIKE"/>
    <property type="match status" value="1"/>
</dbReference>
<dbReference type="PROSITE" id="PS00165">
    <property type="entry name" value="DEHYDRATASE_SER_THR"/>
    <property type="match status" value="1"/>
</dbReference>
<gene>
    <name type="primary">ilvA</name>
    <name type="ordered locus">SAB1946</name>
</gene>
<evidence type="ECO:0000250" key="1"/>
<evidence type="ECO:0000255" key="2">
    <source>
        <dbReference type="PROSITE-ProRule" id="PRU01008"/>
    </source>
</evidence>
<evidence type="ECO:0000305" key="3"/>
<sequence length="422" mass="46966">MTVKTTVSTKDIDEAFLRLKDIVKETPLQLDHYLSQKYDCKVYLKREDLQWVRSFKLRGAYNAISVLSDEAKSKGITCASAGNHAQGVVYTAKKLNLNAVIFMPVTTPLQKVNQVKFFGNSNVEVVLTGDTFDHCLAEALTYTSEHQMNFIDPFNNVHTISGQGTLAKEMLEQSKSDNVNFDYLFAAIGGGGLISGISTYFKSYSPNTKIIGVEPSGASSMYESVVVNNQVITLPNIDKFVDGASVARVGDITFEIAKKNVDNYVQVDEGAVCSTILDMYSKQAIVAEPAGALSVSALENYKDHIKGKTVVCVISGGNNDINRMKEIEERSLLYEEMKHYFILNFPQRPGALREFVNDVLGPQDDITKFEYLKKSSQNTGTVIIGIQLKDHDDLIQLKQRVNHFDPSNIYINENKMLHSLLI</sequence>
<name>ILVA_STAAB</name>
<organism>
    <name type="scientific">Staphylococcus aureus (strain bovine RF122 / ET3-1)</name>
    <dbReference type="NCBI Taxonomy" id="273036"/>
    <lineage>
        <taxon>Bacteria</taxon>
        <taxon>Bacillati</taxon>
        <taxon>Bacillota</taxon>
        <taxon>Bacilli</taxon>
        <taxon>Bacillales</taxon>
        <taxon>Staphylococcaceae</taxon>
        <taxon>Staphylococcus</taxon>
    </lineage>
</organism>